<name>NDK_LEGPL</name>
<keyword id="KW-0067">ATP-binding</keyword>
<keyword id="KW-0963">Cytoplasm</keyword>
<keyword id="KW-0418">Kinase</keyword>
<keyword id="KW-0460">Magnesium</keyword>
<keyword id="KW-0479">Metal-binding</keyword>
<keyword id="KW-0546">Nucleotide metabolism</keyword>
<keyword id="KW-0547">Nucleotide-binding</keyword>
<keyword id="KW-0597">Phosphoprotein</keyword>
<keyword id="KW-0808">Transferase</keyword>
<evidence type="ECO:0000255" key="1">
    <source>
        <dbReference type="HAMAP-Rule" id="MF_00451"/>
    </source>
</evidence>
<dbReference type="EC" id="2.7.4.6" evidence="1"/>
<dbReference type="EMBL" id="CR628337">
    <property type="protein sequence ID" value="CAH15718.1"/>
    <property type="molecule type" value="Genomic_DNA"/>
</dbReference>
<dbReference type="RefSeq" id="WP_011215526.1">
    <property type="nucleotide sequence ID" value="NC_006369.1"/>
</dbReference>
<dbReference type="SMR" id="Q5WWH5"/>
<dbReference type="KEGG" id="lpf:lpl1478"/>
<dbReference type="LegioList" id="lpl1478"/>
<dbReference type="HOGENOM" id="CLU_060216_8_1_6"/>
<dbReference type="Proteomes" id="UP000002517">
    <property type="component" value="Chromosome"/>
</dbReference>
<dbReference type="GO" id="GO:0005737">
    <property type="term" value="C:cytoplasm"/>
    <property type="evidence" value="ECO:0007669"/>
    <property type="project" value="UniProtKB-SubCell"/>
</dbReference>
<dbReference type="GO" id="GO:0005524">
    <property type="term" value="F:ATP binding"/>
    <property type="evidence" value="ECO:0007669"/>
    <property type="project" value="UniProtKB-UniRule"/>
</dbReference>
<dbReference type="GO" id="GO:0046872">
    <property type="term" value="F:metal ion binding"/>
    <property type="evidence" value="ECO:0007669"/>
    <property type="project" value="UniProtKB-KW"/>
</dbReference>
<dbReference type="GO" id="GO:0004550">
    <property type="term" value="F:nucleoside diphosphate kinase activity"/>
    <property type="evidence" value="ECO:0007669"/>
    <property type="project" value="UniProtKB-UniRule"/>
</dbReference>
<dbReference type="GO" id="GO:0006241">
    <property type="term" value="P:CTP biosynthetic process"/>
    <property type="evidence" value="ECO:0007669"/>
    <property type="project" value="UniProtKB-UniRule"/>
</dbReference>
<dbReference type="GO" id="GO:0006183">
    <property type="term" value="P:GTP biosynthetic process"/>
    <property type="evidence" value="ECO:0007669"/>
    <property type="project" value="UniProtKB-UniRule"/>
</dbReference>
<dbReference type="GO" id="GO:0006228">
    <property type="term" value="P:UTP biosynthetic process"/>
    <property type="evidence" value="ECO:0007669"/>
    <property type="project" value="UniProtKB-UniRule"/>
</dbReference>
<dbReference type="CDD" id="cd04413">
    <property type="entry name" value="NDPk_I"/>
    <property type="match status" value="1"/>
</dbReference>
<dbReference type="FunFam" id="3.30.70.141:FF:000001">
    <property type="entry name" value="Nucleoside diphosphate kinase"/>
    <property type="match status" value="1"/>
</dbReference>
<dbReference type="Gene3D" id="3.30.70.141">
    <property type="entry name" value="Nucleoside diphosphate kinase-like domain"/>
    <property type="match status" value="1"/>
</dbReference>
<dbReference type="HAMAP" id="MF_00451">
    <property type="entry name" value="NDP_kinase"/>
    <property type="match status" value="1"/>
</dbReference>
<dbReference type="InterPro" id="IPR034907">
    <property type="entry name" value="NDK-like_dom"/>
</dbReference>
<dbReference type="InterPro" id="IPR036850">
    <property type="entry name" value="NDK-like_dom_sf"/>
</dbReference>
<dbReference type="InterPro" id="IPR001564">
    <property type="entry name" value="Nucleoside_diP_kinase"/>
</dbReference>
<dbReference type="InterPro" id="IPR023005">
    <property type="entry name" value="Nucleoside_diP_kinase_AS"/>
</dbReference>
<dbReference type="NCBIfam" id="NF001908">
    <property type="entry name" value="PRK00668.1"/>
    <property type="match status" value="1"/>
</dbReference>
<dbReference type="PANTHER" id="PTHR46161">
    <property type="entry name" value="NUCLEOSIDE DIPHOSPHATE KINASE"/>
    <property type="match status" value="1"/>
</dbReference>
<dbReference type="PANTHER" id="PTHR46161:SF3">
    <property type="entry name" value="NUCLEOSIDE DIPHOSPHATE KINASE DDB_G0292928-RELATED"/>
    <property type="match status" value="1"/>
</dbReference>
<dbReference type="Pfam" id="PF00334">
    <property type="entry name" value="NDK"/>
    <property type="match status" value="1"/>
</dbReference>
<dbReference type="PRINTS" id="PR01243">
    <property type="entry name" value="NUCDPKINASE"/>
</dbReference>
<dbReference type="SMART" id="SM00562">
    <property type="entry name" value="NDK"/>
    <property type="match status" value="1"/>
</dbReference>
<dbReference type="SUPFAM" id="SSF54919">
    <property type="entry name" value="Nucleoside diphosphate kinase, NDK"/>
    <property type="match status" value="1"/>
</dbReference>
<dbReference type="PROSITE" id="PS00469">
    <property type="entry name" value="NDPK"/>
    <property type="match status" value="1"/>
</dbReference>
<dbReference type="PROSITE" id="PS51374">
    <property type="entry name" value="NDPK_LIKE"/>
    <property type="match status" value="1"/>
</dbReference>
<organism>
    <name type="scientific">Legionella pneumophila (strain Lens)</name>
    <dbReference type="NCBI Taxonomy" id="297245"/>
    <lineage>
        <taxon>Bacteria</taxon>
        <taxon>Pseudomonadati</taxon>
        <taxon>Pseudomonadota</taxon>
        <taxon>Gammaproteobacteria</taxon>
        <taxon>Legionellales</taxon>
        <taxon>Legionellaceae</taxon>
        <taxon>Legionella</taxon>
    </lineage>
</organism>
<accession>Q5WWH5</accession>
<sequence>MAKELTLSIIKPDAVAKSVIGEIYTRFEKAGLDIVAAKMTQLSREQAESFYDIHRARPFFKDLVDFMISGPVMIQVLKGENAVAKNREIMGATNPKEAAPGTIRADFADSIDANAVHGSDSLENAAREIAFFFEPHELCNR</sequence>
<reference key="1">
    <citation type="journal article" date="2004" name="Nat. Genet.">
        <title>Evidence in the Legionella pneumophila genome for exploitation of host cell functions and high genome plasticity.</title>
        <authorList>
            <person name="Cazalet C."/>
            <person name="Rusniok C."/>
            <person name="Brueggemann H."/>
            <person name="Zidane N."/>
            <person name="Magnier A."/>
            <person name="Ma L."/>
            <person name="Tichit M."/>
            <person name="Jarraud S."/>
            <person name="Bouchier C."/>
            <person name="Vandenesch F."/>
            <person name="Kunst F."/>
            <person name="Etienne J."/>
            <person name="Glaser P."/>
            <person name="Buchrieser C."/>
        </authorList>
    </citation>
    <scope>NUCLEOTIDE SEQUENCE [LARGE SCALE GENOMIC DNA]</scope>
    <source>
        <strain>Lens</strain>
    </source>
</reference>
<proteinExistence type="inferred from homology"/>
<comment type="function">
    <text evidence="1">Major role in the synthesis of nucleoside triphosphates other than ATP. The ATP gamma phosphate is transferred to the NDP beta phosphate via a ping-pong mechanism, using a phosphorylated active-site intermediate.</text>
</comment>
<comment type="catalytic activity">
    <reaction evidence="1">
        <text>a 2'-deoxyribonucleoside 5'-diphosphate + ATP = a 2'-deoxyribonucleoside 5'-triphosphate + ADP</text>
        <dbReference type="Rhea" id="RHEA:44640"/>
        <dbReference type="ChEBI" id="CHEBI:30616"/>
        <dbReference type="ChEBI" id="CHEBI:61560"/>
        <dbReference type="ChEBI" id="CHEBI:73316"/>
        <dbReference type="ChEBI" id="CHEBI:456216"/>
        <dbReference type="EC" id="2.7.4.6"/>
    </reaction>
</comment>
<comment type="catalytic activity">
    <reaction evidence="1">
        <text>a ribonucleoside 5'-diphosphate + ATP = a ribonucleoside 5'-triphosphate + ADP</text>
        <dbReference type="Rhea" id="RHEA:18113"/>
        <dbReference type="ChEBI" id="CHEBI:30616"/>
        <dbReference type="ChEBI" id="CHEBI:57930"/>
        <dbReference type="ChEBI" id="CHEBI:61557"/>
        <dbReference type="ChEBI" id="CHEBI:456216"/>
        <dbReference type="EC" id="2.7.4.6"/>
    </reaction>
</comment>
<comment type="cofactor">
    <cofactor evidence="1">
        <name>Mg(2+)</name>
        <dbReference type="ChEBI" id="CHEBI:18420"/>
    </cofactor>
</comment>
<comment type="subunit">
    <text evidence="1">Homotetramer.</text>
</comment>
<comment type="subcellular location">
    <subcellularLocation>
        <location evidence="1">Cytoplasm</location>
    </subcellularLocation>
</comment>
<comment type="similarity">
    <text evidence="1">Belongs to the NDK family.</text>
</comment>
<gene>
    <name evidence="1" type="primary">ndk</name>
    <name type="ordered locus">lpl1478</name>
</gene>
<feature type="chain" id="PRO_0000136997" description="Nucleoside diphosphate kinase">
    <location>
        <begin position="1"/>
        <end position="141"/>
    </location>
</feature>
<feature type="active site" description="Pros-phosphohistidine intermediate" evidence="1">
    <location>
        <position position="117"/>
    </location>
</feature>
<feature type="binding site" evidence="1">
    <location>
        <position position="11"/>
    </location>
    <ligand>
        <name>ATP</name>
        <dbReference type="ChEBI" id="CHEBI:30616"/>
    </ligand>
</feature>
<feature type="binding site" evidence="1">
    <location>
        <position position="59"/>
    </location>
    <ligand>
        <name>ATP</name>
        <dbReference type="ChEBI" id="CHEBI:30616"/>
    </ligand>
</feature>
<feature type="binding site" evidence="1">
    <location>
        <position position="87"/>
    </location>
    <ligand>
        <name>ATP</name>
        <dbReference type="ChEBI" id="CHEBI:30616"/>
    </ligand>
</feature>
<feature type="binding site" evidence="1">
    <location>
        <position position="93"/>
    </location>
    <ligand>
        <name>ATP</name>
        <dbReference type="ChEBI" id="CHEBI:30616"/>
    </ligand>
</feature>
<feature type="binding site" evidence="1">
    <location>
        <position position="104"/>
    </location>
    <ligand>
        <name>ATP</name>
        <dbReference type="ChEBI" id="CHEBI:30616"/>
    </ligand>
</feature>
<feature type="binding site" evidence="1">
    <location>
        <position position="114"/>
    </location>
    <ligand>
        <name>ATP</name>
        <dbReference type="ChEBI" id="CHEBI:30616"/>
    </ligand>
</feature>
<protein>
    <recommendedName>
        <fullName evidence="1">Nucleoside diphosphate kinase</fullName>
        <shortName evidence="1">NDK</shortName>
        <shortName evidence="1">NDP kinase</shortName>
        <ecNumber evidence="1">2.7.4.6</ecNumber>
    </recommendedName>
    <alternativeName>
        <fullName evidence="1">Nucleoside-2-P kinase</fullName>
    </alternativeName>
</protein>